<protein>
    <recommendedName>
        <fullName>Pentatricopeptide repeat-containing protein At1g74850, chloroplastic</fullName>
    </recommendedName>
    <alternativeName>
        <fullName>Protein PLASTID TRANSCRIPTIONALLY ACTIVE 2</fullName>
    </alternativeName>
</protein>
<comment type="function">
    <text evidence="4">Involved in plastid gene expression.</text>
</comment>
<comment type="subcellular location">
    <subcellularLocation>
        <location evidence="4">Plastid</location>
        <location evidence="4">Chloroplast</location>
    </subcellularLocation>
</comment>
<comment type="tissue specificity">
    <text evidence="4">Mostly expressed in leaves, stems and flowers, but barely in roots.</text>
</comment>
<comment type="disruption phenotype">
    <text evidence="4">Lethal without exogenous carbon sources. Decrease of total chlorophyll content as well as a decrease in the chlorophyll a:b ratio. Unequally expanded grana thylakoids. Altered expression profiles of plastid genes.</text>
</comment>
<comment type="similarity">
    <text evidence="5">Belongs to the PPR family. P subfamily.</text>
</comment>
<comment type="online information" name="Pentatricopeptide repeat proteins">
    <link uri="https://ppr.plantenergy.uwa.edu.au"/>
</comment>
<dbReference type="EMBL" id="AC008263">
    <property type="protein sequence ID" value="AAD55291.1"/>
    <property type="molecule type" value="Genomic_DNA"/>
</dbReference>
<dbReference type="EMBL" id="AC013258">
    <property type="protein sequence ID" value="AAG51934.1"/>
    <property type="molecule type" value="Genomic_DNA"/>
</dbReference>
<dbReference type="EMBL" id="CP002684">
    <property type="protein sequence ID" value="AEE35639.1"/>
    <property type="molecule type" value="Genomic_DNA"/>
</dbReference>
<dbReference type="PIR" id="A96778">
    <property type="entry name" value="A96778"/>
</dbReference>
<dbReference type="RefSeq" id="NP_177623.1">
    <property type="nucleotide sequence ID" value="NM_106143.3"/>
</dbReference>
<dbReference type="SMR" id="Q9S7Q2"/>
<dbReference type="BioGRID" id="29043">
    <property type="interactions" value="10"/>
</dbReference>
<dbReference type="FunCoup" id="Q9S7Q2">
    <property type="interactions" value="1601"/>
</dbReference>
<dbReference type="IntAct" id="Q9S7Q2">
    <property type="interactions" value="1"/>
</dbReference>
<dbReference type="MINT" id="Q9S7Q2"/>
<dbReference type="STRING" id="3702.Q9S7Q2"/>
<dbReference type="PaxDb" id="3702-AT1G74850.1"/>
<dbReference type="ProteomicsDB" id="250580"/>
<dbReference type="EnsemblPlants" id="AT1G74850.1">
    <property type="protein sequence ID" value="AT1G74850.1"/>
    <property type="gene ID" value="AT1G74850"/>
</dbReference>
<dbReference type="GeneID" id="843824"/>
<dbReference type="Gramene" id="AT1G74850.1">
    <property type="protein sequence ID" value="AT1G74850.1"/>
    <property type="gene ID" value="AT1G74850"/>
</dbReference>
<dbReference type="KEGG" id="ath:AT1G74850"/>
<dbReference type="Araport" id="AT1G74850"/>
<dbReference type="TAIR" id="AT1G74850">
    <property type="gene designation" value="PTAC2"/>
</dbReference>
<dbReference type="eggNOG" id="KOG4197">
    <property type="taxonomic scope" value="Eukaryota"/>
</dbReference>
<dbReference type="HOGENOM" id="CLU_002706_49_5_1"/>
<dbReference type="InParanoid" id="Q9S7Q2"/>
<dbReference type="OMA" id="DVHRMWE"/>
<dbReference type="OrthoDB" id="185373at2759"/>
<dbReference type="PhylomeDB" id="Q9S7Q2"/>
<dbReference type="PRO" id="PR:Q9S7Q2"/>
<dbReference type="Proteomes" id="UP000006548">
    <property type="component" value="Chromosome 1"/>
</dbReference>
<dbReference type="ExpressionAtlas" id="Q9S7Q2">
    <property type="expression patterns" value="baseline and differential"/>
</dbReference>
<dbReference type="GO" id="GO:0009507">
    <property type="term" value="C:chloroplast"/>
    <property type="evidence" value="ECO:0000314"/>
    <property type="project" value="TAIR"/>
</dbReference>
<dbReference type="GO" id="GO:0042644">
    <property type="term" value="C:chloroplast nucleoid"/>
    <property type="evidence" value="ECO:0007005"/>
    <property type="project" value="TAIR"/>
</dbReference>
<dbReference type="GO" id="GO:0042793">
    <property type="term" value="P:plastid transcription"/>
    <property type="evidence" value="ECO:0000315"/>
    <property type="project" value="TAIR"/>
</dbReference>
<dbReference type="GO" id="GO:0045893">
    <property type="term" value="P:positive regulation of DNA-templated transcription"/>
    <property type="evidence" value="ECO:0000315"/>
    <property type="project" value="TAIR"/>
</dbReference>
<dbReference type="FunFam" id="1.25.40.10:FF:000530">
    <property type="entry name" value="Pentatricopeptide repeat-containing protein At1g74850, chloroplastic"/>
    <property type="match status" value="1"/>
</dbReference>
<dbReference type="FunFam" id="1.25.40.10:FF:001705">
    <property type="entry name" value="Pentatricopeptide repeat-containing protein At1g74850, chloroplastic"/>
    <property type="match status" value="1"/>
</dbReference>
<dbReference type="Gene3D" id="1.25.40.10">
    <property type="entry name" value="Tetratricopeptide repeat domain"/>
    <property type="match status" value="5"/>
</dbReference>
<dbReference type="InterPro" id="IPR002885">
    <property type="entry name" value="Pentatricopeptide_rpt"/>
</dbReference>
<dbReference type="InterPro" id="IPR050667">
    <property type="entry name" value="PPR-containing_protein"/>
</dbReference>
<dbReference type="InterPro" id="IPR002625">
    <property type="entry name" value="Smr_dom"/>
</dbReference>
<dbReference type="InterPro" id="IPR011990">
    <property type="entry name" value="TPR-like_helical_dom_sf"/>
</dbReference>
<dbReference type="NCBIfam" id="TIGR00756">
    <property type="entry name" value="PPR"/>
    <property type="match status" value="11"/>
</dbReference>
<dbReference type="PANTHER" id="PTHR47939">
    <property type="entry name" value="MEMBRANE-ASSOCIATED SALT-INDUCIBLE PROTEIN-LIKE"/>
    <property type="match status" value="1"/>
</dbReference>
<dbReference type="PANTHER" id="PTHR47939:SF13">
    <property type="entry name" value="OS03G0201400 PROTEIN"/>
    <property type="match status" value="1"/>
</dbReference>
<dbReference type="Pfam" id="PF01535">
    <property type="entry name" value="PPR"/>
    <property type="match status" value="2"/>
</dbReference>
<dbReference type="Pfam" id="PF13041">
    <property type="entry name" value="PPR_2"/>
    <property type="match status" value="2"/>
</dbReference>
<dbReference type="Pfam" id="PF13812">
    <property type="entry name" value="PPR_3"/>
    <property type="match status" value="3"/>
</dbReference>
<dbReference type="SMART" id="SM00463">
    <property type="entry name" value="SMR"/>
    <property type="match status" value="1"/>
</dbReference>
<dbReference type="PROSITE" id="PS51375">
    <property type="entry name" value="PPR"/>
    <property type="match status" value="16"/>
</dbReference>
<dbReference type="PROSITE" id="PS50828">
    <property type="entry name" value="SMR"/>
    <property type="match status" value="1"/>
</dbReference>
<accession>Q9S7Q2</accession>
<sequence>MNLAIPNPNSHHLSFLIQNSSFIGNRRFADGNRLRFLSGGNRKPCSFSGKIKAKTKDLVLGNPSVSVEKGKYSYDVESLINKLSSLPPRGSIARCLDIFKNKLSLNDFALVFKEFAGRGDWQRSLRLFKYMQRQIWCKPNEHIYTIMISLLGREGLLDKCLEVFDEMPSQGVSRSVFSYTALINAYGRNGRYETSLELLDRMKNEKISPSILTYNTVINACARGGLDWEGLLGLFAEMRHEGIQPDIVTYNTLLSACAIRGLGDEAEMVFRTMNDGGIVPDLTTYSHLVETFGKLRRLEKVCDLLGEMASGGSLPDITSYNVLLEAYAKSGSIKEAMGVFHQMQAAGCTPNANTYSVLLNLFGQSGRYDDVRQLFLEMKSSNTDPDAATYNILIEVFGEGGYFKEVVTLFHDMVEENIEPDMETYEGIIFACGKGGLHEDARKILQYMTANDIVPSSKAYTGVIEAFGQAALYEEALVAFNTMHEVGSNPSIETFHSLLYSFARGGLVKESEAILSRLVDSGIPRNRDTFNAQIEAYKQGGKFEEAVKTYVDMEKSRCDPDERTLEAVLSVYSFARLVDECREQFEEMKASDILPSIMCYCMMLAVYGKTERWDDVNELLEEMLSNRVSNIHQVIGQMIKGDYDDDSNWQIVEYVLDKLNSEGCGLGIRFYNALLDALWWLGQKERAARVLNEATKRGLFPELFRKNKLVWSVDVHRMSEGGMYTALSVWLNDINDMLLKGDLPQLAVVVSVRGQLEKSSAARESPIAKAAFSFLQDHVSSSFSFTGWNGGRIMCQRSQLKQLLSTKEPTSEESENKNLVALANSPIFAAGTRASTSSDTNHSGNPTQRRTRTKKELAGSTA</sequence>
<organism>
    <name type="scientific">Arabidopsis thaliana</name>
    <name type="common">Mouse-ear cress</name>
    <dbReference type="NCBI Taxonomy" id="3702"/>
    <lineage>
        <taxon>Eukaryota</taxon>
        <taxon>Viridiplantae</taxon>
        <taxon>Streptophyta</taxon>
        <taxon>Embryophyta</taxon>
        <taxon>Tracheophyta</taxon>
        <taxon>Spermatophyta</taxon>
        <taxon>Magnoliopsida</taxon>
        <taxon>eudicotyledons</taxon>
        <taxon>Gunneridae</taxon>
        <taxon>Pentapetalae</taxon>
        <taxon>rosids</taxon>
        <taxon>malvids</taxon>
        <taxon>Brassicales</taxon>
        <taxon>Brassicaceae</taxon>
        <taxon>Camelineae</taxon>
        <taxon>Arabidopsis</taxon>
    </lineage>
</organism>
<feature type="transit peptide" description="Chloroplast" evidence="1">
    <location>
        <begin position="1"/>
        <end position="66"/>
    </location>
</feature>
<feature type="chain" id="PRO_0000342865" description="Pentatricopeptide repeat-containing protein At1g74850, chloroplastic">
    <location>
        <begin position="67"/>
        <end position="862"/>
    </location>
</feature>
<feature type="repeat" description="PPR 1">
    <location>
        <begin position="104"/>
        <end position="139"/>
    </location>
</feature>
<feature type="repeat" description="PPR 2">
    <location>
        <begin position="140"/>
        <end position="174"/>
    </location>
</feature>
<feature type="repeat" description="PPR 3">
    <location>
        <begin position="175"/>
        <end position="209"/>
    </location>
</feature>
<feature type="repeat" description="PPR 4">
    <location>
        <begin position="210"/>
        <end position="245"/>
    </location>
</feature>
<feature type="repeat" description="PPR 5">
    <location>
        <begin position="246"/>
        <end position="280"/>
    </location>
</feature>
<feature type="repeat" description="PPR 6">
    <location>
        <begin position="281"/>
        <end position="315"/>
    </location>
</feature>
<feature type="repeat" description="PPR 7">
    <location>
        <begin position="316"/>
        <end position="350"/>
    </location>
</feature>
<feature type="repeat" description="PPR 8">
    <location>
        <begin position="351"/>
        <end position="385"/>
    </location>
</feature>
<feature type="repeat" description="PPR 9">
    <location>
        <begin position="386"/>
        <end position="420"/>
    </location>
</feature>
<feature type="repeat" description="PPR 10">
    <location>
        <begin position="421"/>
        <end position="455"/>
    </location>
</feature>
<feature type="repeat" description="PPR 11">
    <location>
        <begin position="456"/>
        <end position="490"/>
    </location>
</feature>
<feature type="repeat" description="PPR 12">
    <location>
        <begin position="491"/>
        <end position="525"/>
    </location>
</feature>
<feature type="repeat" description="PPR 13">
    <location>
        <begin position="526"/>
        <end position="560"/>
    </location>
</feature>
<feature type="repeat" description="PPR 14">
    <location>
        <begin position="561"/>
        <end position="595"/>
    </location>
</feature>
<feature type="repeat" description="PPR 15">
    <location>
        <begin position="596"/>
        <end position="630"/>
    </location>
</feature>
<feature type="domain" description="Smr" evidence="2">
    <location>
        <begin position="713"/>
        <end position="801"/>
    </location>
</feature>
<feature type="region of interest" description="Disordered" evidence="3">
    <location>
        <begin position="831"/>
        <end position="862"/>
    </location>
</feature>
<feature type="compositionally biased region" description="Polar residues" evidence="3">
    <location>
        <begin position="833"/>
        <end position="848"/>
    </location>
</feature>
<gene>
    <name type="primary">PTAC2</name>
    <name type="ordered locus">At1g74850</name>
    <name type="ORF">F25A4.18</name>
    <name type="ORF">F9E10.30</name>
</gene>
<evidence type="ECO:0000255" key="1"/>
<evidence type="ECO:0000255" key="2">
    <source>
        <dbReference type="PROSITE-ProRule" id="PRU00321"/>
    </source>
</evidence>
<evidence type="ECO:0000256" key="3">
    <source>
        <dbReference type="SAM" id="MobiDB-lite"/>
    </source>
</evidence>
<evidence type="ECO:0000269" key="4">
    <source>
    </source>
</evidence>
<evidence type="ECO:0000305" key="5"/>
<name>PP124_ARATH</name>
<reference key="1">
    <citation type="journal article" date="2000" name="Nature">
        <title>Sequence and analysis of chromosome 1 of the plant Arabidopsis thaliana.</title>
        <authorList>
            <person name="Theologis A."/>
            <person name="Ecker J.R."/>
            <person name="Palm C.J."/>
            <person name="Federspiel N.A."/>
            <person name="Kaul S."/>
            <person name="White O."/>
            <person name="Alonso J."/>
            <person name="Altafi H."/>
            <person name="Araujo R."/>
            <person name="Bowman C.L."/>
            <person name="Brooks S.Y."/>
            <person name="Buehler E."/>
            <person name="Chan A."/>
            <person name="Chao Q."/>
            <person name="Chen H."/>
            <person name="Cheuk R.F."/>
            <person name="Chin C.W."/>
            <person name="Chung M.K."/>
            <person name="Conn L."/>
            <person name="Conway A.B."/>
            <person name="Conway A.R."/>
            <person name="Creasy T.H."/>
            <person name="Dewar K."/>
            <person name="Dunn P."/>
            <person name="Etgu P."/>
            <person name="Feldblyum T.V."/>
            <person name="Feng J.-D."/>
            <person name="Fong B."/>
            <person name="Fujii C.Y."/>
            <person name="Gill J.E."/>
            <person name="Goldsmith A.D."/>
            <person name="Haas B."/>
            <person name="Hansen N.F."/>
            <person name="Hughes B."/>
            <person name="Huizar L."/>
            <person name="Hunter J.L."/>
            <person name="Jenkins J."/>
            <person name="Johnson-Hopson C."/>
            <person name="Khan S."/>
            <person name="Khaykin E."/>
            <person name="Kim C.J."/>
            <person name="Koo H.L."/>
            <person name="Kremenetskaia I."/>
            <person name="Kurtz D.B."/>
            <person name="Kwan A."/>
            <person name="Lam B."/>
            <person name="Langin-Hooper S."/>
            <person name="Lee A."/>
            <person name="Lee J.M."/>
            <person name="Lenz C.A."/>
            <person name="Li J.H."/>
            <person name="Li Y.-P."/>
            <person name="Lin X."/>
            <person name="Liu S.X."/>
            <person name="Liu Z.A."/>
            <person name="Luros J.S."/>
            <person name="Maiti R."/>
            <person name="Marziali A."/>
            <person name="Militscher J."/>
            <person name="Miranda M."/>
            <person name="Nguyen M."/>
            <person name="Nierman W.C."/>
            <person name="Osborne B.I."/>
            <person name="Pai G."/>
            <person name="Peterson J."/>
            <person name="Pham P.K."/>
            <person name="Rizzo M."/>
            <person name="Rooney T."/>
            <person name="Rowley D."/>
            <person name="Sakano H."/>
            <person name="Salzberg S.L."/>
            <person name="Schwartz J.R."/>
            <person name="Shinn P."/>
            <person name="Southwick A.M."/>
            <person name="Sun H."/>
            <person name="Tallon L.J."/>
            <person name="Tambunga G."/>
            <person name="Toriumi M.J."/>
            <person name="Town C.D."/>
            <person name="Utterback T."/>
            <person name="Van Aken S."/>
            <person name="Vaysberg M."/>
            <person name="Vysotskaia V.S."/>
            <person name="Walker M."/>
            <person name="Wu D."/>
            <person name="Yu G."/>
            <person name="Fraser C.M."/>
            <person name="Venter J.C."/>
            <person name="Davis R.W."/>
        </authorList>
    </citation>
    <scope>NUCLEOTIDE SEQUENCE [LARGE SCALE GENOMIC DNA]</scope>
    <source>
        <strain>cv. Columbia</strain>
    </source>
</reference>
<reference key="2">
    <citation type="journal article" date="2017" name="Plant J.">
        <title>Araport11: a complete reannotation of the Arabidopsis thaliana reference genome.</title>
        <authorList>
            <person name="Cheng C.Y."/>
            <person name="Krishnakumar V."/>
            <person name="Chan A.P."/>
            <person name="Thibaud-Nissen F."/>
            <person name="Schobel S."/>
            <person name="Town C.D."/>
        </authorList>
    </citation>
    <scope>GENOME REANNOTATION</scope>
    <source>
        <strain>cv. Columbia</strain>
    </source>
</reference>
<reference key="3">
    <citation type="journal article" date="2004" name="Plant Cell">
        <title>Genome-wide analysis of Arabidopsis pentatricopeptide repeat proteins reveals their essential role in organelle biogenesis.</title>
        <authorList>
            <person name="Lurin C."/>
            <person name="Andres C."/>
            <person name="Aubourg S."/>
            <person name="Bellaoui M."/>
            <person name="Bitton F."/>
            <person name="Bruyere C."/>
            <person name="Caboche M."/>
            <person name="Debast C."/>
            <person name="Gualberto J."/>
            <person name="Hoffmann B."/>
            <person name="Lecharny A."/>
            <person name="Le Ret M."/>
            <person name="Martin-Magniette M.-L."/>
            <person name="Mireau H."/>
            <person name="Peeters N."/>
            <person name="Renou J.-P."/>
            <person name="Szurek B."/>
            <person name="Taconnat L."/>
            <person name="Small I."/>
        </authorList>
    </citation>
    <scope>GENE FAMILY</scope>
</reference>
<reference key="4">
    <citation type="journal article" date="2006" name="Plant Cell">
        <title>pTAC2, -6, and -12 are components of the transcriptionally active plastid chromosome that are required for plastid gene expression.</title>
        <authorList>
            <person name="Pfalz J."/>
            <person name="Liere K."/>
            <person name="Kandlbinder A."/>
            <person name="Dietz K.-J."/>
            <person name="Oelmueller R."/>
        </authorList>
    </citation>
    <scope>FUNCTION</scope>
    <scope>DISRUPTION PHENOTYPE</scope>
    <scope>SUBCELLULAR LOCATION</scope>
    <scope>TISSUE SPECIFICITY</scope>
</reference>
<proteinExistence type="evidence at transcript level"/>
<keyword id="KW-0150">Chloroplast</keyword>
<keyword id="KW-0934">Plastid</keyword>
<keyword id="KW-1185">Reference proteome</keyword>
<keyword id="KW-0677">Repeat</keyword>
<keyword id="KW-0804">Transcription</keyword>
<keyword id="KW-0805">Transcription regulation</keyword>
<keyword id="KW-0809">Transit peptide</keyword>